<feature type="chain" id="PRO_0000404101" description="3-ketosteroid-9-alpha-monooxygenase, ferredoxin reductase component">
    <location>
        <begin position="1"/>
        <end position="353"/>
    </location>
</feature>
<feature type="domain" description="FAD-binding FR-type" evidence="3">
    <location>
        <begin position="8"/>
        <end position="117"/>
    </location>
</feature>
<feature type="domain" description="2Fe-2S ferredoxin-type" evidence="2">
    <location>
        <begin position="264"/>
        <end position="353"/>
    </location>
</feature>
<feature type="binding site" evidence="2">
    <location>
        <position position="300"/>
    </location>
    <ligand>
        <name>[2Fe-2S] cluster</name>
        <dbReference type="ChEBI" id="CHEBI:190135"/>
    </ligand>
</feature>
<feature type="binding site" evidence="2">
    <location>
        <position position="305"/>
    </location>
    <ligand>
        <name>[2Fe-2S] cluster</name>
        <dbReference type="ChEBI" id="CHEBI:190135"/>
    </ligand>
</feature>
<feature type="binding site" evidence="2">
    <location>
        <position position="308"/>
    </location>
    <ligand>
        <name>[2Fe-2S] cluster</name>
        <dbReference type="ChEBI" id="CHEBI:190135"/>
    </ligand>
</feature>
<feature type="binding site" evidence="2">
    <location>
        <position position="338"/>
    </location>
    <ligand>
        <name>[2Fe-2S] cluster</name>
        <dbReference type="ChEBI" id="CHEBI:190135"/>
    </ligand>
</feature>
<proteinExistence type="inferred from homology"/>
<comment type="function">
    <text evidence="1">Involved in the degradation of cholesterol. Catalyzes the introduction of a 9a-hydroxyl moiety into 1,4-androstadiene-3,17-dione (ADD) to yield the 9alpha-hydroxy-1,4-androstadiene-3,17-dione (9OHADD) intermediate which spontaneously form 3-hydroxy-9,10-seconandrost-1,3,5(10)-triene-9,17-dione (HSA) via the meta-cleavage of ring B with concomitant aromatization of ring A.</text>
</comment>
<comment type="catalytic activity">
    <reaction evidence="1">
        <text>androsta-1,4-diene-3,17-dione + 2 reduced [2Fe-2S]-[ferredoxin] + O2 + 2 H(+) = 9alpha-hydroxyandrosta-1,4-diene-3,17-dione + 2 oxidized [2Fe-2S]-[ferredoxin] + H2O</text>
        <dbReference type="Rhea" id="RHEA:32199"/>
        <dbReference type="Rhea" id="RHEA-COMP:10000"/>
        <dbReference type="Rhea" id="RHEA-COMP:10001"/>
        <dbReference type="ChEBI" id="CHEBI:15377"/>
        <dbReference type="ChEBI" id="CHEBI:15378"/>
        <dbReference type="ChEBI" id="CHEBI:15379"/>
        <dbReference type="ChEBI" id="CHEBI:33737"/>
        <dbReference type="ChEBI" id="CHEBI:33738"/>
        <dbReference type="ChEBI" id="CHEBI:40799"/>
        <dbReference type="ChEBI" id="CHEBI:63641"/>
        <dbReference type="EC" id="1.14.15.30"/>
    </reaction>
</comment>
<comment type="cofactor">
    <cofactor evidence="1">
        <name>FAD</name>
        <dbReference type="ChEBI" id="CHEBI:57692"/>
    </cofactor>
    <text evidence="1">Binds 1 FAD per subunit.</text>
</comment>
<comment type="cofactor">
    <cofactor evidence="2">
        <name>[2Fe-2S] cluster</name>
        <dbReference type="ChEBI" id="CHEBI:190135"/>
    </cofactor>
    <text evidence="2">Binds 1 2Fe-2S cluster.</text>
</comment>
<comment type="pathway">
    <text evidence="1">Lipid metabolism; steroid biosynthesis.</text>
</comment>
<comment type="subunit">
    <text evidence="1">Monomer. The two-component system 3-ketosteroid-9-alpha-monooxygenase is composed of an oxygenase component KshA and a reductase component KshB.</text>
</comment>
<comment type="induction">
    <text evidence="1">Induced by KstR.</text>
</comment>
<protein>
    <recommendedName>
        <fullName evidence="1">3-ketosteroid-9-alpha-monooxygenase, ferredoxin reductase component</fullName>
    </recommendedName>
    <alternativeName>
        <fullName evidence="1">3-ketosteroid-9-alpha-hydroxylase, ferredoxin reductase component</fullName>
        <shortName evidence="1">KSH</shortName>
    </alternativeName>
    <alternativeName>
        <fullName evidence="1">Androsta-1,4-diene-3,17-dione 9-alpha-hydroxylase</fullName>
        <ecNumber evidence="1">1.14.15.30</ecNumber>
    </alternativeName>
    <alternativeName>
        <fullName evidence="1">Rieske-type oxygenase</fullName>
        <shortName evidence="1">RO</shortName>
    </alternativeName>
</protein>
<gene>
    <name type="primary">kshB</name>
    <name type="synonym">hmp</name>
    <name type="ordered locus">MSMEG_6039</name>
    <name type="ordered locus">MSMEI_5878</name>
</gene>
<evidence type="ECO:0000250" key="1">
    <source>
        <dbReference type="UniProtKB" id="P9WJ93"/>
    </source>
</evidence>
<evidence type="ECO:0000255" key="2">
    <source>
        <dbReference type="PROSITE-ProRule" id="PRU00465"/>
    </source>
</evidence>
<evidence type="ECO:0000255" key="3">
    <source>
        <dbReference type="PROSITE-ProRule" id="PRU00716"/>
    </source>
</evidence>
<accession>A0R525</accession>
<accession>I7GFB3</accession>
<dbReference type="EC" id="1.14.15.30" evidence="1"/>
<dbReference type="EMBL" id="CP000480">
    <property type="protein sequence ID" value="ABK72126.1"/>
    <property type="molecule type" value="Genomic_DNA"/>
</dbReference>
<dbReference type="EMBL" id="CP001663">
    <property type="protein sequence ID" value="AFP42311.1"/>
    <property type="molecule type" value="Genomic_DNA"/>
</dbReference>
<dbReference type="RefSeq" id="WP_011730993.1">
    <property type="nucleotide sequence ID" value="NZ_SIJM01000017.1"/>
</dbReference>
<dbReference type="RefSeq" id="YP_890263.1">
    <property type="nucleotide sequence ID" value="NC_008596.1"/>
</dbReference>
<dbReference type="SMR" id="A0R525"/>
<dbReference type="STRING" id="246196.MSMEG_6039"/>
<dbReference type="PaxDb" id="246196-MSMEI_5878"/>
<dbReference type="KEGG" id="msb:LJ00_29855"/>
<dbReference type="KEGG" id="msg:MSMEI_5878"/>
<dbReference type="KEGG" id="msm:MSMEG_6039"/>
<dbReference type="PATRIC" id="fig|246196.19.peg.5875"/>
<dbReference type="eggNOG" id="COG1018">
    <property type="taxonomic scope" value="Bacteria"/>
</dbReference>
<dbReference type="OrthoDB" id="9796486at2"/>
<dbReference type="UniPathway" id="UPA00062"/>
<dbReference type="Proteomes" id="UP000000757">
    <property type="component" value="Chromosome"/>
</dbReference>
<dbReference type="Proteomes" id="UP000006158">
    <property type="component" value="Chromosome"/>
</dbReference>
<dbReference type="GO" id="GO:0051537">
    <property type="term" value="F:2 iron, 2 sulfur cluster binding"/>
    <property type="evidence" value="ECO:0007669"/>
    <property type="project" value="UniProtKB-KW"/>
</dbReference>
<dbReference type="GO" id="GO:0036200">
    <property type="term" value="F:3-ketosteroid 9-alpha-monooxygenase activity"/>
    <property type="evidence" value="ECO:0007669"/>
    <property type="project" value="UniProtKB-EC"/>
</dbReference>
<dbReference type="GO" id="GO:0050660">
    <property type="term" value="F:flavin adenine dinucleotide binding"/>
    <property type="evidence" value="ECO:0007669"/>
    <property type="project" value="TreeGrafter"/>
</dbReference>
<dbReference type="GO" id="GO:0046872">
    <property type="term" value="F:metal ion binding"/>
    <property type="evidence" value="ECO:0007669"/>
    <property type="project" value="UniProtKB-KW"/>
</dbReference>
<dbReference type="GO" id="GO:0008203">
    <property type="term" value="P:cholesterol metabolic process"/>
    <property type="evidence" value="ECO:0007669"/>
    <property type="project" value="UniProtKB-KW"/>
</dbReference>
<dbReference type="GO" id="GO:0016042">
    <property type="term" value="P:lipid catabolic process"/>
    <property type="evidence" value="ECO:0007669"/>
    <property type="project" value="UniProtKB-KW"/>
</dbReference>
<dbReference type="GO" id="GO:0006694">
    <property type="term" value="P:steroid biosynthetic process"/>
    <property type="evidence" value="ECO:0007669"/>
    <property type="project" value="UniProtKB-UniPathway"/>
</dbReference>
<dbReference type="CDD" id="cd00207">
    <property type="entry name" value="fer2"/>
    <property type="match status" value="1"/>
</dbReference>
<dbReference type="CDD" id="cd06214">
    <property type="entry name" value="PA_degradation_oxidoreductase_like"/>
    <property type="match status" value="1"/>
</dbReference>
<dbReference type="FunFam" id="3.10.20.30:FF:000023">
    <property type="entry name" value="3-ketosteroid-9-alpha-hydroxylase reductase subunit"/>
    <property type="match status" value="1"/>
</dbReference>
<dbReference type="FunFam" id="2.40.30.10:FF:000133">
    <property type="entry name" value="Flavodoxin reductase Hmp"/>
    <property type="match status" value="1"/>
</dbReference>
<dbReference type="Gene3D" id="3.10.20.30">
    <property type="match status" value="1"/>
</dbReference>
<dbReference type="Gene3D" id="3.40.50.80">
    <property type="entry name" value="Nucleotide-binding domain of ferredoxin-NADP reductase (FNR) module"/>
    <property type="match status" value="1"/>
</dbReference>
<dbReference type="Gene3D" id="2.40.30.10">
    <property type="entry name" value="Translation factors"/>
    <property type="match status" value="1"/>
</dbReference>
<dbReference type="InterPro" id="IPR036010">
    <property type="entry name" value="2Fe-2S_ferredoxin-like_sf"/>
</dbReference>
<dbReference type="InterPro" id="IPR001041">
    <property type="entry name" value="2Fe-2S_ferredoxin-type"/>
</dbReference>
<dbReference type="InterPro" id="IPR006058">
    <property type="entry name" value="2Fe2S_fd_BS"/>
</dbReference>
<dbReference type="InterPro" id="IPR012675">
    <property type="entry name" value="Beta-grasp_dom_sf"/>
</dbReference>
<dbReference type="InterPro" id="IPR008333">
    <property type="entry name" value="Cbr1-like_FAD-bd_dom"/>
</dbReference>
<dbReference type="InterPro" id="IPR017927">
    <property type="entry name" value="FAD-bd_FR_type"/>
</dbReference>
<dbReference type="InterPro" id="IPR001709">
    <property type="entry name" value="Flavoprot_Pyr_Nucl_cyt_Rdtase"/>
</dbReference>
<dbReference type="InterPro" id="IPR039261">
    <property type="entry name" value="FNR_nucleotide-bd"/>
</dbReference>
<dbReference type="InterPro" id="IPR050415">
    <property type="entry name" value="MRET"/>
</dbReference>
<dbReference type="InterPro" id="IPR001433">
    <property type="entry name" value="OxRdtase_FAD/NAD-bd"/>
</dbReference>
<dbReference type="InterPro" id="IPR017938">
    <property type="entry name" value="Riboflavin_synthase-like_b-brl"/>
</dbReference>
<dbReference type="PANTHER" id="PTHR47354:SF8">
    <property type="entry name" value="1,2-PHENYLACETYL-COA EPOXIDASE, SUBUNIT E"/>
    <property type="match status" value="1"/>
</dbReference>
<dbReference type="PANTHER" id="PTHR47354">
    <property type="entry name" value="NADH OXIDOREDUCTASE HCR"/>
    <property type="match status" value="1"/>
</dbReference>
<dbReference type="Pfam" id="PF00970">
    <property type="entry name" value="FAD_binding_6"/>
    <property type="match status" value="1"/>
</dbReference>
<dbReference type="Pfam" id="PF00111">
    <property type="entry name" value="Fer2"/>
    <property type="match status" value="1"/>
</dbReference>
<dbReference type="Pfam" id="PF00175">
    <property type="entry name" value="NAD_binding_1"/>
    <property type="match status" value="1"/>
</dbReference>
<dbReference type="PRINTS" id="PR00371">
    <property type="entry name" value="FPNCR"/>
</dbReference>
<dbReference type="PRINTS" id="PR00410">
    <property type="entry name" value="PHEHYDRXLASE"/>
</dbReference>
<dbReference type="SUPFAM" id="SSF54292">
    <property type="entry name" value="2Fe-2S ferredoxin-like"/>
    <property type="match status" value="1"/>
</dbReference>
<dbReference type="SUPFAM" id="SSF52343">
    <property type="entry name" value="Ferredoxin reductase-like, C-terminal NADP-linked domain"/>
    <property type="match status" value="1"/>
</dbReference>
<dbReference type="SUPFAM" id="SSF63380">
    <property type="entry name" value="Riboflavin synthase domain-like"/>
    <property type="match status" value="1"/>
</dbReference>
<dbReference type="PROSITE" id="PS00197">
    <property type="entry name" value="2FE2S_FER_1"/>
    <property type="match status" value="1"/>
</dbReference>
<dbReference type="PROSITE" id="PS51085">
    <property type="entry name" value="2FE2S_FER_2"/>
    <property type="match status" value="1"/>
</dbReference>
<dbReference type="PROSITE" id="PS51384">
    <property type="entry name" value="FAD_FR"/>
    <property type="match status" value="1"/>
</dbReference>
<keyword id="KW-0001">2Fe-2S</keyword>
<keyword id="KW-0153">Cholesterol metabolism</keyword>
<keyword id="KW-0274">FAD</keyword>
<keyword id="KW-0285">Flavoprotein</keyword>
<keyword id="KW-0408">Iron</keyword>
<keyword id="KW-0411">Iron-sulfur</keyword>
<keyword id="KW-0442">Lipid degradation</keyword>
<keyword id="KW-0443">Lipid metabolism</keyword>
<keyword id="KW-0479">Metal-binding</keyword>
<keyword id="KW-0560">Oxidoreductase</keyword>
<keyword id="KW-1185">Reference proteome</keyword>
<keyword id="KW-0753">Steroid metabolism</keyword>
<keyword id="KW-1207">Sterol metabolism</keyword>
<organism>
    <name type="scientific">Mycolicibacterium smegmatis (strain ATCC 700084 / mc(2)155)</name>
    <name type="common">Mycobacterium smegmatis</name>
    <dbReference type="NCBI Taxonomy" id="246196"/>
    <lineage>
        <taxon>Bacteria</taxon>
        <taxon>Bacillati</taxon>
        <taxon>Actinomycetota</taxon>
        <taxon>Actinomycetes</taxon>
        <taxon>Mycobacteriales</taxon>
        <taxon>Mycobacteriaceae</taxon>
        <taxon>Mycolicibacterium</taxon>
    </lineage>
</organism>
<name>KSHB_MYCS2</name>
<reference key="1">
    <citation type="submission" date="2006-10" db="EMBL/GenBank/DDBJ databases">
        <authorList>
            <person name="Fleischmann R.D."/>
            <person name="Dodson R.J."/>
            <person name="Haft D.H."/>
            <person name="Merkel J.S."/>
            <person name="Nelson W.C."/>
            <person name="Fraser C.M."/>
        </authorList>
    </citation>
    <scope>NUCLEOTIDE SEQUENCE [LARGE SCALE GENOMIC DNA]</scope>
    <source>
        <strain>ATCC 700084 / mc(2)155</strain>
    </source>
</reference>
<reference key="2">
    <citation type="journal article" date="2007" name="Genome Biol.">
        <title>Interrupted coding sequences in Mycobacterium smegmatis: authentic mutations or sequencing errors?</title>
        <authorList>
            <person name="Deshayes C."/>
            <person name="Perrodou E."/>
            <person name="Gallien S."/>
            <person name="Euphrasie D."/>
            <person name="Schaeffer C."/>
            <person name="Van-Dorsselaer A."/>
            <person name="Poch O."/>
            <person name="Lecompte O."/>
            <person name="Reyrat J.-M."/>
        </authorList>
    </citation>
    <scope>NUCLEOTIDE SEQUENCE [LARGE SCALE GENOMIC DNA]</scope>
    <source>
        <strain>ATCC 700084 / mc(2)155</strain>
    </source>
</reference>
<reference key="3">
    <citation type="journal article" date="2009" name="Genome Res.">
        <title>Ortho-proteogenomics: multiple proteomes investigation through orthology and a new MS-based protocol.</title>
        <authorList>
            <person name="Gallien S."/>
            <person name="Perrodou E."/>
            <person name="Carapito C."/>
            <person name="Deshayes C."/>
            <person name="Reyrat J.-M."/>
            <person name="Van Dorsselaer A."/>
            <person name="Poch O."/>
            <person name="Schaeffer C."/>
            <person name="Lecompte O."/>
        </authorList>
    </citation>
    <scope>NUCLEOTIDE SEQUENCE [LARGE SCALE GENOMIC DNA]</scope>
    <source>
        <strain>ATCC 700084 / mc(2)155</strain>
    </source>
</reference>
<sequence>MTDEPLGSHVLELQVAEVVEETSDARSLVFTVPEGAEIAADRLRYSPGQFLTLRVPSDRTGSVARCYSLSSSPTTDDRLTVTVKRTADGYASNWLCDNAHAGMRIHVLAPSGTFVPKDLDTDFLLLAAGSGITPMMAICKSALAEGTGNVVLIYANRDENSVIFAGALRELAAKYPDRLTVVHWLETVQGLPTAAGLGALAKPFAGREAFICGPGPFMTAAEDALRAAGTPDDHIHIEVFKSLESDPFAAVVIPEDDGDDQGPATAVVTLDGTTHEIRWPRSAKLLDVLLDKGLDAPFSCREGHCGACAVLKKSGEVHMEINDVLEPSDLEEGLILGCQATPVSDSVEVTYDE</sequence>